<gene>
    <name evidence="1" type="primary">gatZ</name>
    <name type="ordered locus">SeHA_C3552</name>
</gene>
<name>GATZ_SALHS</name>
<comment type="function">
    <text evidence="1">Component of the tagatose-1,6-bisphosphate aldolase GatYZ that is required for full activity and stability of the Y subunit. Could have a chaperone-like function for the proper and stable folding of GatY. When expressed alone, GatZ does not show any aldolase activity. Is involved in the catabolism of galactitol.</text>
</comment>
<comment type="pathway">
    <text evidence="1">Carbohydrate metabolism; D-tagatose 6-phosphate degradation; D-glyceraldehyde 3-phosphate and glycerone phosphate from D-tagatose 6-phosphate: step 2/2.</text>
</comment>
<comment type="subunit">
    <text evidence="1">Forms a complex with GatY.</text>
</comment>
<comment type="similarity">
    <text evidence="1">Belongs to the GatZ/KbaZ family. GatZ subfamily.</text>
</comment>
<proteinExistence type="inferred from homology"/>
<sequence>MKEIISRHKAGEQIGICSVCSAHPLVIESALRFDLNSGNKVLIEATSNQVNQFGGYTGMKPADFRDFVYGIAQEVGFPRERLILGGDHLGPNCWQNEPAAAAMEKSVELIKAYVAAGFSKIHLDASMSCADDPTPLDPMVVARRAAVLCKAAEETANEEQKCHLTYVIGTEVPVPGGEASTIGSVHVTREVDAARTLETHQIAFRESGLEEALSRVIAIVVQPGVEFDHTQIIHYQPQAAQALSAWIKETPMVYEAHSTDYQTRQAYRALVRDHYAILKVGPALTFALREAIFALAQMENELISPEQRSRVLEVIDEVMLNEPGYWKKYYRPTWSQAMVDIHFSLSDRIRYYWPHPRIRQSVEKLIANLNNVTLPLGLISQFMPVQFERLSEGVLTPTPHNLIIDKIQDVLRAYRFGCTPDVA</sequence>
<evidence type="ECO:0000255" key="1">
    <source>
        <dbReference type="HAMAP-Rule" id="MF_01296"/>
    </source>
</evidence>
<organism>
    <name type="scientific">Salmonella heidelberg (strain SL476)</name>
    <dbReference type="NCBI Taxonomy" id="454169"/>
    <lineage>
        <taxon>Bacteria</taxon>
        <taxon>Pseudomonadati</taxon>
        <taxon>Pseudomonadota</taxon>
        <taxon>Gammaproteobacteria</taxon>
        <taxon>Enterobacterales</taxon>
        <taxon>Enterobacteriaceae</taxon>
        <taxon>Salmonella</taxon>
    </lineage>
</organism>
<protein>
    <recommendedName>
        <fullName evidence="1">D-tagatose-1,6-bisphosphate aldolase subunit GatZ</fullName>
    </recommendedName>
</protein>
<reference key="1">
    <citation type="journal article" date="2011" name="J. Bacteriol.">
        <title>Comparative genomics of 28 Salmonella enterica isolates: evidence for CRISPR-mediated adaptive sublineage evolution.</title>
        <authorList>
            <person name="Fricke W.F."/>
            <person name="Mammel M.K."/>
            <person name="McDermott P.F."/>
            <person name="Tartera C."/>
            <person name="White D.G."/>
            <person name="Leclerc J.E."/>
            <person name="Ravel J."/>
            <person name="Cebula T.A."/>
        </authorList>
    </citation>
    <scope>NUCLEOTIDE SEQUENCE [LARGE SCALE GENOMIC DNA]</scope>
    <source>
        <strain>SL476</strain>
    </source>
</reference>
<keyword id="KW-0298">Galactitol metabolism</keyword>
<feature type="chain" id="PRO_0000372512" description="D-tagatose-1,6-bisphosphate aldolase subunit GatZ">
    <location>
        <begin position="1"/>
        <end position="423"/>
    </location>
</feature>
<dbReference type="EMBL" id="CP001120">
    <property type="protein sequence ID" value="ACF67428.1"/>
    <property type="molecule type" value="Genomic_DNA"/>
</dbReference>
<dbReference type="RefSeq" id="WP_000658736.1">
    <property type="nucleotide sequence ID" value="NC_011083.1"/>
</dbReference>
<dbReference type="SMR" id="B4TIY0"/>
<dbReference type="KEGG" id="seh:SeHA_C3552"/>
<dbReference type="HOGENOM" id="CLU_053334_0_0_6"/>
<dbReference type="UniPathway" id="UPA00704">
    <property type="reaction ID" value="UER00716"/>
</dbReference>
<dbReference type="Proteomes" id="UP000001866">
    <property type="component" value="Chromosome"/>
</dbReference>
<dbReference type="GO" id="GO:0005886">
    <property type="term" value="C:plasma membrane"/>
    <property type="evidence" value="ECO:0007669"/>
    <property type="project" value="TreeGrafter"/>
</dbReference>
<dbReference type="GO" id="GO:2001059">
    <property type="term" value="P:D-tagatose 6-phosphate catabolic process"/>
    <property type="evidence" value="ECO:0007669"/>
    <property type="project" value="UniProtKB-UniRule"/>
</dbReference>
<dbReference type="GO" id="GO:0019402">
    <property type="term" value="P:galactitol metabolic process"/>
    <property type="evidence" value="ECO:0007669"/>
    <property type="project" value="UniProtKB-KW"/>
</dbReference>
<dbReference type="GO" id="GO:0009401">
    <property type="term" value="P:phosphoenolpyruvate-dependent sugar phosphotransferase system"/>
    <property type="evidence" value="ECO:0007669"/>
    <property type="project" value="TreeGrafter"/>
</dbReference>
<dbReference type="FunFam" id="1.10.400.20:FF:000001">
    <property type="entry name" value="D-tagatose-1,6-bisphosphate aldolase subunit GatZ"/>
    <property type="match status" value="1"/>
</dbReference>
<dbReference type="FunFam" id="3.20.20.70:FF:000141">
    <property type="entry name" value="D-tagatose-1,6-bisphosphate aldolase subunit GatZ"/>
    <property type="match status" value="1"/>
</dbReference>
<dbReference type="Gene3D" id="3.20.20.70">
    <property type="entry name" value="Aldolase class I"/>
    <property type="match status" value="1"/>
</dbReference>
<dbReference type="Gene3D" id="1.10.400.20">
    <property type="entry name" value="putative tagatose 6-phosphate kinase domain like"/>
    <property type="match status" value="1"/>
</dbReference>
<dbReference type="HAMAP" id="MF_01296">
    <property type="entry name" value="Tagatose_aldol_GatZ"/>
    <property type="match status" value="1"/>
</dbReference>
<dbReference type="InterPro" id="IPR013785">
    <property type="entry name" value="Aldolase_TIM"/>
</dbReference>
<dbReference type="InterPro" id="IPR012062">
    <property type="entry name" value="GatZ/KbaZ-like"/>
</dbReference>
<dbReference type="InterPro" id="IPR050303">
    <property type="entry name" value="GatZ_KbaZ_carbometab"/>
</dbReference>
<dbReference type="InterPro" id="IPR023436">
    <property type="entry name" value="TagBP_ald_GatZ"/>
</dbReference>
<dbReference type="NCBIfam" id="TIGR02810">
    <property type="entry name" value="agaZ_gatZ"/>
    <property type="match status" value="1"/>
</dbReference>
<dbReference type="NCBIfam" id="NF011626">
    <property type="entry name" value="PRK15052.1"/>
    <property type="match status" value="1"/>
</dbReference>
<dbReference type="PANTHER" id="PTHR32502:SF12">
    <property type="entry name" value="D-TAGATOSE-1,6-BISPHOSPHATE ALDOLASE SUBUNIT GATZ"/>
    <property type="match status" value="1"/>
</dbReference>
<dbReference type="PANTHER" id="PTHR32502">
    <property type="entry name" value="N-ACETYLGALACTOSAMINE PERMEASE II COMPONENT-RELATED"/>
    <property type="match status" value="1"/>
</dbReference>
<dbReference type="Pfam" id="PF08013">
    <property type="entry name" value="GatZ_KbaZ-like"/>
    <property type="match status" value="1"/>
</dbReference>
<dbReference type="PIRSF" id="PIRSF009264">
    <property type="entry name" value="TagBP_ald_AgaZ"/>
    <property type="match status" value="1"/>
</dbReference>
<dbReference type="SUPFAM" id="SSF51569">
    <property type="entry name" value="Aldolase"/>
    <property type="match status" value="1"/>
</dbReference>
<accession>B4TIY0</accession>